<evidence type="ECO:0000255" key="1">
    <source>
        <dbReference type="HAMAP-Rule" id="MF_00210"/>
    </source>
</evidence>
<feature type="chain" id="PRO_0000325384" description="3-phosphoshikimate 1-carboxyvinyltransferase">
    <location>
        <begin position="1"/>
        <end position="439"/>
    </location>
</feature>
<feature type="active site" description="Proton acceptor" evidence="1">
    <location>
        <position position="326"/>
    </location>
</feature>
<feature type="binding site" evidence="1">
    <location>
        <position position="27"/>
    </location>
    <ligand>
        <name>3-phosphoshikimate</name>
        <dbReference type="ChEBI" id="CHEBI:145989"/>
    </ligand>
</feature>
<feature type="binding site" evidence="1">
    <location>
        <position position="27"/>
    </location>
    <ligand>
        <name>phosphoenolpyruvate</name>
        <dbReference type="ChEBI" id="CHEBI:58702"/>
    </ligand>
</feature>
<feature type="binding site" evidence="1">
    <location>
        <position position="28"/>
    </location>
    <ligand>
        <name>3-phosphoshikimate</name>
        <dbReference type="ChEBI" id="CHEBI:145989"/>
    </ligand>
</feature>
<feature type="binding site" evidence="1">
    <location>
        <position position="32"/>
    </location>
    <ligand>
        <name>3-phosphoshikimate</name>
        <dbReference type="ChEBI" id="CHEBI:145989"/>
    </ligand>
</feature>
<feature type="binding site" evidence="1">
    <location>
        <position position="101"/>
    </location>
    <ligand>
        <name>phosphoenolpyruvate</name>
        <dbReference type="ChEBI" id="CHEBI:58702"/>
    </ligand>
</feature>
<feature type="binding site" evidence="1">
    <location>
        <position position="130"/>
    </location>
    <ligand>
        <name>phosphoenolpyruvate</name>
        <dbReference type="ChEBI" id="CHEBI:58702"/>
    </ligand>
</feature>
<feature type="binding site" evidence="1">
    <location>
        <position position="175"/>
    </location>
    <ligand>
        <name>3-phosphoshikimate</name>
        <dbReference type="ChEBI" id="CHEBI:145989"/>
    </ligand>
</feature>
<feature type="binding site" evidence="1">
    <location>
        <position position="177"/>
    </location>
    <ligand>
        <name>3-phosphoshikimate</name>
        <dbReference type="ChEBI" id="CHEBI:145989"/>
    </ligand>
</feature>
<feature type="binding site" evidence="1">
    <location>
        <position position="177"/>
    </location>
    <ligand>
        <name>phosphoenolpyruvate</name>
        <dbReference type="ChEBI" id="CHEBI:58702"/>
    </ligand>
</feature>
<feature type="binding site" evidence="1">
    <location>
        <position position="326"/>
    </location>
    <ligand>
        <name>3-phosphoshikimate</name>
        <dbReference type="ChEBI" id="CHEBI:145989"/>
    </ligand>
</feature>
<feature type="binding site" evidence="1">
    <location>
        <position position="353"/>
    </location>
    <ligand>
        <name>3-phosphoshikimate</name>
        <dbReference type="ChEBI" id="CHEBI:145989"/>
    </ligand>
</feature>
<feature type="binding site" evidence="1">
    <location>
        <position position="357"/>
    </location>
    <ligand>
        <name>phosphoenolpyruvate</name>
        <dbReference type="ChEBI" id="CHEBI:58702"/>
    </ligand>
</feature>
<feature type="binding site" evidence="1">
    <location>
        <position position="399"/>
    </location>
    <ligand>
        <name>phosphoenolpyruvate</name>
        <dbReference type="ChEBI" id="CHEBI:58702"/>
    </ligand>
</feature>
<organism>
    <name type="scientific">Synechococcus sp. (strain CC9311)</name>
    <dbReference type="NCBI Taxonomy" id="64471"/>
    <lineage>
        <taxon>Bacteria</taxon>
        <taxon>Bacillati</taxon>
        <taxon>Cyanobacteriota</taxon>
        <taxon>Cyanophyceae</taxon>
        <taxon>Synechococcales</taxon>
        <taxon>Synechococcaceae</taxon>
        <taxon>Synechococcus</taxon>
    </lineage>
</organism>
<accession>Q0I9Y0</accession>
<dbReference type="EC" id="2.5.1.19" evidence="1"/>
<dbReference type="EMBL" id="CP000435">
    <property type="protein sequence ID" value="ABI46412.1"/>
    <property type="molecule type" value="Genomic_DNA"/>
</dbReference>
<dbReference type="RefSeq" id="WP_011619459.1">
    <property type="nucleotide sequence ID" value="NC_008319.1"/>
</dbReference>
<dbReference type="SMR" id="Q0I9Y0"/>
<dbReference type="STRING" id="64471.sync_1537"/>
<dbReference type="KEGG" id="syg:sync_1537"/>
<dbReference type="eggNOG" id="COG0128">
    <property type="taxonomic scope" value="Bacteria"/>
</dbReference>
<dbReference type="HOGENOM" id="CLU_024321_0_1_3"/>
<dbReference type="OrthoDB" id="9809920at2"/>
<dbReference type="UniPathway" id="UPA00053">
    <property type="reaction ID" value="UER00089"/>
</dbReference>
<dbReference type="Proteomes" id="UP000001961">
    <property type="component" value="Chromosome"/>
</dbReference>
<dbReference type="GO" id="GO:0005737">
    <property type="term" value="C:cytoplasm"/>
    <property type="evidence" value="ECO:0007669"/>
    <property type="project" value="UniProtKB-SubCell"/>
</dbReference>
<dbReference type="GO" id="GO:0003866">
    <property type="term" value="F:3-phosphoshikimate 1-carboxyvinyltransferase activity"/>
    <property type="evidence" value="ECO:0007669"/>
    <property type="project" value="UniProtKB-UniRule"/>
</dbReference>
<dbReference type="GO" id="GO:0008652">
    <property type="term" value="P:amino acid biosynthetic process"/>
    <property type="evidence" value="ECO:0007669"/>
    <property type="project" value="UniProtKB-KW"/>
</dbReference>
<dbReference type="GO" id="GO:0009073">
    <property type="term" value="P:aromatic amino acid family biosynthetic process"/>
    <property type="evidence" value="ECO:0007669"/>
    <property type="project" value="UniProtKB-KW"/>
</dbReference>
<dbReference type="GO" id="GO:0009423">
    <property type="term" value="P:chorismate biosynthetic process"/>
    <property type="evidence" value="ECO:0007669"/>
    <property type="project" value="UniProtKB-UniRule"/>
</dbReference>
<dbReference type="CDD" id="cd01556">
    <property type="entry name" value="EPSP_synthase"/>
    <property type="match status" value="1"/>
</dbReference>
<dbReference type="FunFam" id="3.65.10.10:FF:000005">
    <property type="entry name" value="3-phosphoshikimate 1-carboxyvinyltransferase"/>
    <property type="match status" value="1"/>
</dbReference>
<dbReference type="FunFam" id="3.65.10.10:FF:000006">
    <property type="entry name" value="3-phosphoshikimate 1-carboxyvinyltransferase"/>
    <property type="match status" value="1"/>
</dbReference>
<dbReference type="Gene3D" id="3.65.10.10">
    <property type="entry name" value="Enolpyruvate transferase domain"/>
    <property type="match status" value="2"/>
</dbReference>
<dbReference type="HAMAP" id="MF_00210">
    <property type="entry name" value="EPSP_synth"/>
    <property type="match status" value="1"/>
</dbReference>
<dbReference type="InterPro" id="IPR001986">
    <property type="entry name" value="Enolpyruvate_Tfrase_dom"/>
</dbReference>
<dbReference type="InterPro" id="IPR036968">
    <property type="entry name" value="Enolpyruvate_Tfrase_sf"/>
</dbReference>
<dbReference type="InterPro" id="IPR006264">
    <property type="entry name" value="EPSP_synthase"/>
</dbReference>
<dbReference type="InterPro" id="IPR023193">
    <property type="entry name" value="EPSP_synthase_CS"/>
</dbReference>
<dbReference type="InterPro" id="IPR013792">
    <property type="entry name" value="RNA3'P_cycl/enolpyr_Trfase_a/b"/>
</dbReference>
<dbReference type="NCBIfam" id="TIGR01356">
    <property type="entry name" value="aroA"/>
    <property type="match status" value="1"/>
</dbReference>
<dbReference type="PANTHER" id="PTHR21090">
    <property type="entry name" value="AROM/DEHYDROQUINATE SYNTHASE"/>
    <property type="match status" value="1"/>
</dbReference>
<dbReference type="PANTHER" id="PTHR21090:SF5">
    <property type="entry name" value="PENTAFUNCTIONAL AROM POLYPEPTIDE"/>
    <property type="match status" value="1"/>
</dbReference>
<dbReference type="Pfam" id="PF00275">
    <property type="entry name" value="EPSP_synthase"/>
    <property type="match status" value="1"/>
</dbReference>
<dbReference type="PIRSF" id="PIRSF000505">
    <property type="entry name" value="EPSPS"/>
    <property type="match status" value="1"/>
</dbReference>
<dbReference type="SUPFAM" id="SSF55205">
    <property type="entry name" value="EPT/RTPC-like"/>
    <property type="match status" value="1"/>
</dbReference>
<dbReference type="PROSITE" id="PS00104">
    <property type="entry name" value="EPSP_SYNTHASE_1"/>
    <property type="match status" value="1"/>
</dbReference>
<dbReference type="PROSITE" id="PS00885">
    <property type="entry name" value="EPSP_SYNTHASE_2"/>
    <property type="match status" value="1"/>
</dbReference>
<reference key="1">
    <citation type="journal article" date="2006" name="Proc. Natl. Acad. Sci. U.S.A.">
        <title>Genome sequence of Synechococcus CC9311: insights into adaptation to a coastal environment.</title>
        <authorList>
            <person name="Palenik B."/>
            <person name="Ren Q."/>
            <person name="Dupont C.L."/>
            <person name="Myers G.S."/>
            <person name="Heidelberg J.F."/>
            <person name="Badger J.H."/>
            <person name="Madupu R."/>
            <person name="Nelson W.C."/>
            <person name="Brinkac L.M."/>
            <person name="Dodson R.J."/>
            <person name="Durkin A.S."/>
            <person name="Daugherty S.C."/>
            <person name="Sullivan S.A."/>
            <person name="Khouri H."/>
            <person name="Mohamoud Y."/>
            <person name="Halpin R."/>
            <person name="Paulsen I.T."/>
        </authorList>
    </citation>
    <scope>NUCLEOTIDE SEQUENCE [LARGE SCALE GENOMIC DNA]</scope>
    <source>
        <strain>CC9311</strain>
    </source>
</reference>
<sequence>MSGSNGSPRDLKAGGSLRGRVRVPGDKSISHRALLFGAIAEGTTTIEGLLPAEDPISTAACLRSMGTTISPIQSGEIVTIEGVGLDGLEEPSEILDCGNSGTTMRLMLGLLAGREGRHFVLTGDSSLRRRPMNRVGQPLSLLGANVRGRDHGNLAPLAVQGQRLRGAVVGTPVASAQVKSAILLAALTAEGSTSVIEPAHSRDHSERMLRAFGADLEVGGEMGRHILVRPGATLKGQHVVVPGDISSAAFWLVAGALVPGATITVENVGLNPTRTGILEVLEMMGASIEVLNRRDVAGEPVGDLQVSHGPLKAFQFGEEIMPRLVDEVPILSVAACFCDGESRISGAAELRVKETDRLAVMARQLKAMGADIDEHPDGLTIRGGHSLKGAELDSETDHRVAMSLAVAGLMAEGDSRITRSEAAAVSYPTFWDDLERLRR</sequence>
<proteinExistence type="inferred from homology"/>
<protein>
    <recommendedName>
        <fullName evidence="1">3-phosphoshikimate 1-carboxyvinyltransferase</fullName>
        <ecNumber evidence="1">2.5.1.19</ecNumber>
    </recommendedName>
    <alternativeName>
        <fullName evidence="1">5-enolpyruvylshikimate-3-phosphate synthase</fullName>
        <shortName evidence="1">EPSP synthase</shortName>
        <shortName evidence="1">EPSPS</shortName>
    </alternativeName>
</protein>
<keyword id="KW-0028">Amino-acid biosynthesis</keyword>
<keyword id="KW-0057">Aromatic amino acid biosynthesis</keyword>
<keyword id="KW-0963">Cytoplasm</keyword>
<keyword id="KW-1185">Reference proteome</keyword>
<keyword id="KW-0808">Transferase</keyword>
<name>AROA_SYNS3</name>
<gene>
    <name evidence="1" type="primary">aroA</name>
    <name type="ordered locus">sync_1537</name>
</gene>
<comment type="function">
    <text evidence="1">Catalyzes the transfer of the enolpyruvyl moiety of phosphoenolpyruvate (PEP) to the 5-hydroxyl of shikimate-3-phosphate (S3P) to produce enolpyruvyl shikimate-3-phosphate and inorganic phosphate.</text>
</comment>
<comment type="catalytic activity">
    <reaction evidence="1">
        <text>3-phosphoshikimate + phosphoenolpyruvate = 5-O-(1-carboxyvinyl)-3-phosphoshikimate + phosphate</text>
        <dbReference type="Rhea" id="RHEA:21256"/>
        <dbReference type="ChEBI" id="CHEBI:43474"/>
        <dbReference type="ChEBI" id="CHEBI:57701"/>
        <dbReference type="ChEBI" id="CHEBI:58702"/>
        <dbReference type="ChEBI" id="CHEBI:145989"/>
        <dbReference type="EC" id="2.5.1.19"/>
    </reaction>
    <physiologicalReaction direction="left-to-right" evidence="1">
        <dbReference type="Rhea" id="RHEA:21257"/>
    </physiologicalReaction>
</comment>
<comment type="pathway">
    <text evidence="1">Metabolic intermediate biosynthesis; chorismate biosynthesis; chorismate from D-erythrose 4-phosphate and phosphoenolpyruvate: step 6/7.</text>
</comment>
<comment type="subunit">
    <text evidence="1">Monomer.</text>
</comment>
<comment type="subcellular location">
    <subcellularLocation>
        <location evidence="1">Cytoplasm</location>
    </subcellularLocation>
</comment>
<comment type="similarity">
    <text evidence="1">Belongs to the EPSP synthase family.</text>
</comment>